<name>SIGA_STRGR</name>
<reference key="1">
    <citation type="journal article" date="1995" name="J. Biochem.">
        <title>Nucleotide sequence of a principal sigma factor gene (hrdB) of Streptomyces griseus.</title>
        <authorList>
            <person name="Shinkawa H."/>
            <person name="Hatada Y."/>
            <person name="Okada M."/>
            <person name="Kinashi H."/>
            <person name="Nimi O."/>
        </authorList>
    </citation>
    <scope>NUCLEOTIDE SEQUENCE [GENOMIC DNA]</scope>
    <scope>PARTIAL PROTEIN SEQUENCE</scope>
    <source>
        <strain>2247</strain>
    </source>
</reference>
<gene>
    <name evidence="1" type="primary">sigA</name>
    <name type="synonym">hrdB</name>
</gene>
<accession>P77951</accession>
<keyword id="KW-0963">Cytoplasm</keyword>
<keyword id="KW-0903">Direct protein sequencing</keyword>
<keyword id="KW-0238">DNA-binding</keyword>
<keyword id="KW-0731">Sigma factor</keyword>
<keyword id="KW-0804">Transcription</keyword>
<keyword id="KW-0805">Transcription regulation</keyword>
<comment type="function">
    <text evidence="1">Sigma factors are initiation factors that promote the attachment of RNA polymerase to specific initiation sites and are then released. This sigma factor is the primary sigma factor during exponential growth.</text>
</comment>
<comment type="subunit">
    <text evidence="1">Interacts transiently with the RNA polymerase catalytic core.</text>
</comment>
<comment type="subcellular location">
    <subcellularLocation>
        <location evidence="1">Cytoplasm</location>
    </subcellularLocation>
</comment>
<comment type="similarity">
    <text evidence="1">Belongs to the sigma-70 factor family. RpoD/SigA subfamily.</text>
</comment>
<organism>
    <name type="scientific">Streptomyces griseus</name>
    <dbReference type="NCBI Taxonomy" id="1911"/>
    <lineage>
        <taxon>Bacteria</taxon>
        <taxon>Bacillati</taxon>
        <taxon>Actinomycetota</taxon>
        <taxon>Actinomycetes</taxon>
        <taxon>Kitasatosporales</taxon>
        <taxon>Streptomycetaceae</taxon>
        <taxon>Streptomyces</taxon>
    </lineage>
</organism>
<proteinExistence type="evidence at protein level"/>
<protein>
    <recommendedName>
        <fullName evidence="1">RNA polymerase sigma factor SigA</fullName>
    </recommendedName>
    <alternativeName>
        <fullName>RNA polymerase principal sigma factor HrdB</fullName>
    </alternativeName>
</protein>
<sequence>MSASTSRTLPPEIAESESVMALIERGKADGQIAGDDVRRAFEADQIPPTQWKNVLRSLNQILEEEGVTLMVSAAESPKRARKSVAAKSPVKRTATKTVAAKTTVTRTVAATAAPAVESADAADDAVAAAPAKKTAAKKATAKKAAAKKTTAKKTAAKKSGKQDDEILDGDEAAEEVKAGKGEEEEGEGENKGFVLSDDDEDDAPAQQVAVAGATADPVKDYLKQIGKVPLLNAEQEVELAKRIEAGLFAEDKLANADKLAPKLKRELEIIAEDGRRAKNHLLEANLRLVVSLAKRYTGRGMLFLDLIQEGNLGLIRAVEKFDYTKGYKFSTYATWWIRQAITRAMADQARTIRIPVHMVEVINKLARVQRQMLQDLGREPTPEELAKELDMTPEKVIEVQKYGREPISLHTPLGEDGDSEFGDLIEDSEAVVPADAVSFTLLQEQLHSVLDTLSEREAGVVSMRFGLTDGQPKTLDEIGKVYGVTRERIRQIESKTMSKLRHPSRSQVLRDYLD</sequence>
<dbReference type="EMBL" id="L08071">
    <property type="protein sequence ID" value="AAB16905.1"/>
    <property type="molecule type" value="Genomic_DNA"/>
</dbReference>
<dbReference type="RefSeq" id="WP_003965769.1">
    <property type="nucleotide sequence ID" value="NZ_UAVD01000038.1"/>
</dbReference>
<dbReference type="SMR" id="P77951"/>
<dbReference type="STRING" id="1911.GCA_001715295_00082"/>
<dbReference type="OMA" id="QIPVTKW"/>
<dbReference type="OrthoDB" id="9809557at2"/>
<dbReference type="GO" id="GO:0005737">
    <property type="term" value="C:cytoplasm"/>
    <property type="evidence" value="ECO:0007669"/>
    <property type="project" value="UniProtKB-SubCell"/>
</dbReference>
<dbReference type="GO" id="GO:0003677">
    <property type="term" value="F:DNA binding"/>
    <property type="evidence" value="ECO:0007669"/>
    <property type="project" value="UniProtKB-UniRule"/>
</dbReference>
<dbReference type="GO" id="GO:0016987">
    <property type="term" value="F:sigma factor activity"/>
    <property type="evidence" value="ECO:0007669"/>
    <property type="project" value="UniProtKB-UniRule"/>
</dbReference>
<dbReference type="GO" id="GO:0006352">
    <property type="term" value="P:DNA-templated transcription initiation"/>
    <property type="evidence" value="ECO:0007669"/>
    <property type="project" value="UniProtKB-UniRule"/>
</dbReference>
<dbReference type="CDD" id="cd06171">
    <property type="entry name" value="Sigma70_r4"/>
    <property type="match status" value="1"/>
</dbReference>
<dbReference type="FunFam" id="1.10.10.10:FF:000002">
    <property type="entry name" value="RNA polymerase sigma factor SigA"/>
    <property type="match status" value="1"/>
</dbReference>
<dbReference type="FunFam" id="1.10.10.10:FF:000004">
    <property type="entry name" value="RNA polymerase sigma factor SigA"/>
    <property type="match status" value="1"/>
</dbReference>
<dbReference type="FunFam" id="1.10.601.10:FF:000001">
    <property type="entry name" value="RNA polymerase sigma factor SigA"/>
    <property type="match status" value="1"/>
</dbReference>
<dbReference type="FunFam" id="1.10.601.10:FF:000003">
    <property type="entry name" value="RNA polymerase sigma factor SigA"/>
    <property type="match status" value="1"/>
</dbReference>
<dbReference type="Gene3D" id="1.10.601.10">
    <property type="entry name" value="RNA Polymerase Primary Sigma Factor"/>
    <property type="match status" value="2"/>
</dbReference>
<dbReference type="Gene3D" id="1.10.10.10">
    <property type="entry name" value="Winged helix-like DNA-binding domain superfamily/Winged helix DNA-binding domain"/>
    <property type="match status" value="2"/>
</dbReference>
<dbReference type="HAMAP" id="MF_00963">
    <property type="entry name" value="Sigma70_RpoD_SigA"/>
    <property type="match status" value="1"/>
</dbReference>
<dbReference type="InterPro" id="IPR014284">
    <property type="entry name" value="RNA_pol_sigma-70_dom"/>
</dbReference>
<dbReference type="InterPro" id="IPR000943">
    <property type="entry name" value="RNA_pol_sigma70"/>
</dbReference>
<dbReference type="InterPro" id="IPR009042">
    <property type="entry name" value="RNA_pol_sigma70_r1_2"/>
</dbReference>
<dbReference type="InterPro" id="IPR007627">
    <property type="entry name" value="RNA_pol_sigma70_r2"/>
</dbReference>
<dbReference type="InterPro" id="IPR007624">
    <property type="entry name" value="RNA_pol_sigma70_r3"/>
</dbReference>
<dbReference type="InterPro" id="IPR007630">
    <property type="entry name" value="RNA_pol_sigma70_r4"/>
</dbReference>
<dbReference type="InterPro" id="IPR013325">
    <property type="entry name" value="RNA_pol_sigma_r2"/>
</dbReference>
<dbReference type="InterPro" id="IPR013324">
    <property type="entry name" value="RNA_pol_sigma_r3/r4-like"/>
</dbReference>
<dbReference type="InterPro" id="IPR012760">
    <property type="entry name" value="RNA_pol_sigma_RpoD_C"/>
</dbReference>
<dbReference type="InterPro" id="IPR050239">
    <property type="entry name" value="Sigma-70_RNA_pol_init_factors"/>
</dbReference>
<dbReference type="InterPro" id="IPR028630">
    <property type="entry name" value="Sigma70_RpoD"/>
</dbReference>
<dbReference type="InterPro" id="IPR036388">
    <property type="entry name" value="WH-like_DNA-bd_sf"/>
</dbReference>
<dbReference type="NCBIfam" id="NF004561">
    <property type="entry name" value="PRK05901.1-3"/>
    <property type="match status" value="1"/>
</dbReference>
<dbReference type="NCBIfam" id="NF005920">
    <property type="entry name" value="PRK07921.1"/>
    <property type="match status" value="1"/>
</dbReference>
<dbReference type="NCBIfam" id="TIGR02393">
    <property type="entry name" value="RpoD_Cterm"/>
    <property type="match status" value="1"/>
</dbReference>
<dbReference type="NCBIfam" id="TIGR02937">
    <property type="entry name" value="sigma70-ECF"/>
    <property type="match status" value="1"/>
</dbReference>
<dbReference type="PANTHER" id="PTHR30603:SF59">
    <property type="entry name" value="RNA POLYMERASE PRINCIPAL SIGMA FACTOR HRDA"/>
    <property type="match status" value="1"/>
</dbReference>
<dbReference type="PANTHER" id="PTHR30603">
    <property type="entry name" value="RNA POLYMERASE SIGMA FACTOR RPO"/>
    <property type="match status" value="1"/>
</dbReference>
<dbReference type="Pfam" id="PF00140">
    <property type="entry name" value="Sigma70_r1_2"/>
    <property type="match status" value="1"/>
</dbReference>
<dbReference type="Pfam" id="PF04542">
    <property type="entry name" value="Sigma70_r2"/>
    <property type="match status" value="1"/>
</dbReference>
<dbReference type="Pfam" id="PF04539">
    <property type="entry name" value="Sigma70_r3"/>
    <property type="match status" value="1"/>
</dbReference>
<dbReference type="Pfam" id="PF04545">
    <property type="entry name" value="Sigma70_r4"/>
    <property type="match status" value="1"/>
</dbReference>
<dbReference type="PRINTS" id="PR00046">
    <property type="entry name" value="SIGMA70FCT"/>
</dbReference>
<dbReference type="SUPFAM" id="SSF88946">
    <property type="entry name" value="Sigma2 domain of RNA polymerase sigma factors"/>
    <property type="match status" value="1"/>
</dbReference>
<dbReference type="SUPFAM" id="SSF88659">
    <property type="entry name" value="Sigma3 and sigma4 domains of RNA polymerase sigma factors"/>
    <property type="match status" value="2"/>
</dbReference>
<dbReference type="PROSITE" id="PS00715">
    <property type="entry name" value="SIGMA70_1"/>
    <property type="match status" value="1"/>
</dbReference>
<dbReference type="PROSITE" id="PS00716">
    <property type="entry name" value="SIGMA70_2"/>
    <property type="match status" value="1"/>
</dbReference>
<evidence type="ECO:0000255" key="1">
    <source>
        <dbReference type="HAMAP-Rule" id="MF_00963"/>
    </source>
</evidence>
<evidence type="ECO:0000256" key="2">
    <source>
        <dbReference type="SAM" id="MobiDB-lite"/>
    </source>
</evidence>
<feature type="chain" id="PRO_0000093992" description="RNA polymerase sigma factor SigA">
    <location>
        <begin position="1"/>
        <end position="514"/>
    </location>
</feature>
<feature type="DNA-binding region" description="H-T-H motif" evidence="1">
    <location>
        <begin position="475"/>
        <end position="494"/>
    </location>
</feature>
<feature type="region of interest" description="Disordered" evidence="2">
    <location>
        <begin position="135"/>
        <end position="205"/>
    </location>
</feature>
<feature type="region of interest" description="Sigma-70 factor domain-2" evidence="1">
    <location>
        <begin position="281"/>
        <end position="351"/>
    </location>
</feature>
<feature type="region of interest" description="Sigma-70 factor domain-3" evidence="1">
    <location>
        <begin position="360"/>
        <end position="436"/>
    </location>
</feature>
<feature type="region of interest" description="Sigma-70 factor domain-4" evidence="1">
    <location>
        <begin position="449"/>
        <end position="502"/>
    </location>
</feature>
<feature type="short sequence motif" description="Interaction with polymerase core subunit RpoC">
    <location>
        <begin position="305"/>
        <end position="308"/>
    </location>
</feature>
<feature type="compositionally biased region" description="Basic residues" evidence="2">
    <location>
        <begin position="135"/>
        <end position="159"/>
    </location>
</feature>